<reference key="1">
    <citation type="journal article" date="1998" name="Science">
        <title>Genome sequence of the nematode C. elegans: a platform for investigating biology.</title>
        <authorList>
            <consortium name="The C. elegans sequencing consortium"/>
        </authorList>
    </citation>
    <scope>NUCLEOTIDE SEQUENCE [LARGE SCALE GENOMIC DNA]</scope>
    <source>
        <strain>Bristol N2</strain>
    </source>
</reference>
<comment type="subcellular location">
    <subcellularLocation>
        <location evidence="2">Membrane</location>
        <topology evidence="2">Multi-pass membrane protein</topology>
    </subcellularLocation>
</comment>
<comment type="similarity">
    <text evidence="2">Belongs to the nematode receptor-like protein srg family.</text>
</comment>
<sequence>MDSSTAPLSIITKLALFERTCDSSYSPLAENLKYLVQFVYLLPAAMLHARILYILLWKHRNLYLKQSFYILFIMSCIACFTLVVQDIFFARVFQYMTQFCEPMSEFVENYPIFPAIYYPLQQHLHCAQPIIQILLTVNRMSCVVIPWKHSQVWKSFMKYAIALVILTPFLFIWNIIISKKLPVYTFGGFYIGYERVVIWATMTLFMLILRAITIVITAVCTFITVLRLTRMSKRLVSSERTLCIASFLISSCFLGTAAAESLFAFQVVRTSTSISYFLLPISWDILNVGTPIVMVMASSQLRRHVFGILKRSRSNSRVEDGTIVTGF</sequence>
<accession>P46571</accession>
<name>SRG2_CAEEL</name>
<keyword id="KW-0472">Membrane</keyword>
<keyword id="KW-1185">Reference proteome</keyword>
<keyword id="KW-0812">Transmembrane</keyword>
<keyword id="KW-1133">Transmembrane helix</keyword>
<organism>
    <name type="scientific">Caenorhabditis elegans</name>
    <dbReference type="NCBI Taxonomy" id="6239"/>
    <lineage>
        <taxon>Eukaryota</taxon>
        <taxon>Metazoa</taxon>
        <taxon>Ecdysozoa</taxon>
        <taxon>Nematoda</taxon>
        <taxon>Chromadorea</taxon>
        <taxon>Rhabditida</taxon>
        <taxon>Rhabditina</taxon>
        <taxon>Rhabditomorpha</taxon>
        <taxon>Rhabditoidea</taxon>
        <taxon>Rhabditidae</taxon>
        <taxon>Peloderinae</taxon>
        <taxon>Caenorhabditis</taxon>
    </lineage>
</organism>
<dbReference type="EMBL" id="FO080617">
    <property type="protein sequence ID" value="CCD65202.1"/>
    <property type="molecule type" value="Genomic_DNA"/>
</dbReference>
<dbReference type="PIR" id="T15556">
    <property type="entry name" value="T15556"/>
</dbReference>
<dbReference type="RefSeq" id="NP_498367.2">
    <property type="nucleotide sequence ID" value="NM_065966.2"/>
</dbReference>
<dbReference type="FunCoup" id="P46571">
    <property type="interactions" value="1"/>
</dbReference>
<dbReference type="STRING" id="6239.C18F10.5.1"/>
<dbReference type="PaxDb" id="6239-C18F10.5"/>
<dbReference type="EnsemblMetazoa" id="C18F10.5.1">
    <property type="protein sequence ID" value="C18F10.5.1"/>
    <property type="gene ID" value="WBGene00005160"/>
</dbReference>
<dbReference type="GeneID" id="182793"/>
<dbReference type="KEGG" id="cel:CELE_C18F10.5"/>
<dbReference type="UCSC" id="C18F10.5">
    <property type="organism name" value="c. elegans"/>
</dbReference>
<dbReference type="AGR" id="WB:WBGene00005160"/>
<dbReference type="CTD" id="182793"/>
<dbReference type="WormBase" id="C18F10.5">
    <property type="protein sequence ID" value="CE33032"/>
    <property type="gene ID" value="WBGene00005160"/>
    <property type="gene designation" value="srg-2"/>
</dbReference>
<dbReference type="eggNOG" id="ENOG502TH60">
    <property type="taxonomic scope" value="Eukaryota"/>
</dbReference>
<dbReference type="GeneTree" id="ENSGT00970000195841"/>
<dbReference type="HOGENOM" id="CLU_061253_1_0_1"/>
<dbReference type="InParanoid" id="P46571"/>
<dbReference type="OMA" id="FARVFQY"/>
<dbReference type="OrthoDB" id="5821903at2759"/>
<dbReference type="PhylomeDB" id="P46571"/>
<dbReference type="PRO" id="PR:P46571"/>
<dbReference type="Proteomes" id="UP000001940">
    <property type="component" value="Chromosome III"/>
</dbReference>
<dbReference type="Bgee" id="WBGene00005160">
    <property type="expression patterns" value="Expressed in material anatomical entity and 3 other cell types or tissues"/>
</dbReference>
<dbReference type="GO" id="GO:0016020">
    <property type="term" value="C:membrane"/>
    <property type="evidence" value="ECO:0007669"/>
    <property type="project" value="UniProtKB-SubCell"/>
</dbReference>
<dbReference type="GO" id="GO:0004888">
    <property type="term" value="F:transmembrane signaling receptor activity"/>
    <property type="evidence" value="ECO:0007669"/>
    <property type="project" value="InterPro"/>
</dbReference>
<dbReference type="GO" id="GO:0007606">
    <property type="term" value="P:sensory perception of chemical stimulus"/>
    <property type="evidence" value="ECO:0007669"/>
    <property type="project" value="InterPro"/>
</dbReference>
<dbReference type="InterPro" id="IPR000609">
    <property type="entry name" value="7TM_GPCR_serpentine_rcpt_Srg"/>
</dbReference>
<dbReference type="InterPro" id="IPR051119">
    <property type="entry name" value="Nematode_SR-like"/>
</dbReference>
<dbReference type="PANTHER" id="PTHR31627:SF13">
    <property type="entry name" value="SERPENTINE RECEPTOR CLASS GAMMA-1-RELATED"/>
    <property type="match status" value="1"/>
</dbReference>
<dbReference type="PANTHER" id="PTHR31627">
    <property type="entry name" value="SERPENTINE RECEPTOR CLASS GAMMA-RELATED"/>
    <property type="match status" value="1"/>
</dbReference>
<dbReference type="Pfam" id="PF02118">
    <property type="entry name" value="Srg"/>
    <property type="match status" value="1"/>
</dbReference>
<dbReference type="PRINTS" id="PR00698">
    <property type="entry name" value="TMPROTEINSRG"/>
</dbReference>
<gene>
    <name type="primary">srg-2</name>
    <name type="ORF">C18F10.5</name>
</gene>
<evidence type="ECO:0000255" key="1"/>
<evidence type="ECO:0000305" key="2"/>
<proteinExistence type="inferred from homology"/>
<feature type="chain" id="PRO_0000104552" description="Serpentine receptor class gamma-2">
    <location>
        <begin position="1"/>
        <end position="327"/>
    </location>
</feature>
<feature type="transmembrane region" description="Helical" evidence="1">
    <location>
        <begin position="35"/>
        <end position="55"/>
    </location>
</feature>
<feature type="transmembrane region" description="Helical" evidence="1">
    <location>
        <begin position="70"/>
        <end position="90"/>
    </location>
</feature>
<feature type="transmembrane region" description="Helical" evidence="1">
    <location>
        <begin position="157"/>
        <end position="177"/>
    </location>
</feature>
<feature type="transmembrane region" description="Helical" evidence="1">
    <location>
        <begin position="181"/>
        <end position="203"/>
    </location>
</feature>
<feature type="transmembrane region" description="Helical" evidence="1">
    <location>
        <begin position="244"/>
        <end position="264"/>
    </location>
</feature>
<feature type="transmembrane region" description="Helical" evidence="1">
    <location>
        <begin position="277"/>
        <end position="297"/>
    </location>
</feature>
<protein>
    <recommendedName>
        <fullName>Serpentine receptor class gamma-2</fullName>
        <shortName>Protein srg-2</shortName>
    </recommendedName>
</protein>